<gene>
    <name evidence="1" type="primary">hisG</name>
    <name type="ordered locus">LMOf2365_0597</name>
</gene>
<comment type="function">
    <text evidence="1">Catalyzes the condensation of ATP and 5-phosphoribose 1-diphosphate to form N'-(5'-phosphoribosyl)-ATP (PR-ATP). Has a crucial role in the pathway because the rate of histidine biosynthesis seems to be controlled primarily by regulation of HisG enzymatic activity.</text>
</comment>
<comment type="catalytic activity">
    <reaction evidence="1">
        <text>1-(5-phospho-beta-D-ribosyl)-ATP + diphosphate = 5-phospho-alpha-D-ribose 1-diphosphate + ATP</text>
        <dbReference type="Rhea" id="RHEA:18473"/>
        <dbReference type="ChEBI" id="CHEBI:30616"/>
        <dbReference type="ChEBI" id="CHEBI:33019"/>
        <dbReference type="ChEBI" id="CHEBI:58017"/>
        <dbReference type="ChEBI" id="CHEBI:73183"/>
        <dbReference type="EC" id="2.4.2.17"/>
    </reaction>
</comment>
<comment type="pathway">
    <text evidence="1">Amino-acid biosynthesis; L-histidine biosynthesis; L-histidine from 5-phospho-alpha-D-ribose 1-diphosphate: step 1/9.</text>
</comment>
<comment type="subunit">
    <text evidence="1">Heteromultimer composed of HisG and HisZ subunits.</text>
</comment>
<comment type="subcellular location">
    <subcellularLocation>
        <location evidence="1">Cytoplasm</location>
    </subcellularLocation>
</comment>
<comment type="domain">
    <text>Lacks the C-terminal regulatory region which is replaced by HisZ.</text>
</comment>
<comment type="similarity">
    <text evidence="1">Belongs to the ATP phosphoribosyltransferase family. Short subfamily.</text>
</comment>
<sequence>MKALKIALTKGRLEKDAVALLEKAGIDCSSMTDKKRKLIFHSSTQPISFILVKAVDVMTYVKHGVADIGIVGKDVLMEASKSHYEMLDLEIGKCQFCLASTPDFDPSSYRRKIIATKYPTVASKFFREKGEDVEIIKIEGSVEIAPVLGLADAIIDIVETGSTLKENGLLIYEKMYPISARLIVNKASLKQNKTQIFQLIDQLEQVIKEERAE</sequence>
<protein>
    <recommendedName>
        <fullName evidence="1">ATP phosphoribosyltransferase</fullName>
        <shortName evidence="1">ATP-PRT</shortName>
        <shortName evidence="1">ATP-PRTase</shortName>
        <ecNumber evidence="1">2.4.2.17</ecNumber>
    </recommendedName>
</protein>
<proteinExistence type="inferred from homology"/>
<dbReference type="EC" id="2.4.2.17" evidence="1"/>
<dbReference type="EMBL" id="AE017262">
    <property type="protein sequence ID" value="AAT03379.1"/>
    <property type="molecule type" value="Genomic_DNA"/>
</dbReference>
<dbReference type="RefSeq" id="WP_003725470.1">
    <property type="nucleotide sequence ID" value="NC_002973.6"/>
</dbReference>
<dbReference type="SMR" id="Q722Y2"/>
<dbReference type="KEGG" id="lmf:LMOf2365_0597"/>
<dbReference type="HOGENOM" id="CLU_038115_2_0_9"/>
<dbReference type="UniPathway" id="UPA00031">
    <property type="reaction ID" value="UER00006"/>
</dbReference>
<dbReference type="GO" id="GO:0005737">
    <property type="term" value="C:cytoplasm"/>
    <property type="evidence" value="ECO:0007669"/>
    <property type="project" value="UniProtKB-SubCell"/>
</dbReference>
<dbReference type="GO" id="GO:0005524">
    <property type="term" value="F:ATP binding"/>
    <property type="evidence" value="ECO:0007669"/>
    <property type="project" value="UniProtKB-KW"/>
</dbReference>
<dbReference type="GO" id="GO:0003879">
    <property type="term" value="F:ATP phosphoribosyltransferase activity"/>
    <property type="evidence" value="ECO:0007669"/>
    <property type="project" value="UniProtKB-UniRule"/>
</dbReference>
<dbReference type="GO" id="GO:0000105">
    <property type="term" value="P:L-histidine biosynthetic process"/>
    <property type="evidence" value="ECO:0007669"/>
    <property type="project" value="UniProtKB-UniRule"/>
</dbReference>
<dbReference type="CDD" id="cd13595">
    <property type="entry name" value="PBP2_HisGs"/>
    <property type="match status" value="1"/>
</dbReference>
<dbReference type="FunFam" id="3.40.190.10:FF:000008">
    <property type="entry name" value="ATP phosphoribosyltransferase"/>
    <property type="match status" value="1"/>
</dbReference>
<dbReference type="FunFam" id="3.40.190.10:FF:000011">
    <property type="entry name" value="ATP phosphoribosyltransferase"/>
    <property type="match status" value="1"/>
</dbReference>
<dbReference type="Gene3D" id="3.40.190.10">
    <property type="entry name" value="Periplasmic binding protein-like II"/>
    <property type="match status" value="2"/>
</dbReference>
<dbReference type="HAMAP" id="MF_01018">
    <property type="entry name" value="HisG_Short"/>
    <property type="match status" value="1"/>
</dbReference>
<dbReference type="InterPro" id="IPR013820">
    <property type="entry name" value="ATP_PRibTrfase_cat"/>
</dbReference>
<dbReference type="InterPro" id="IPR018198">
    <property type="entry name" value="ATP_PRibTrfase_CS"/>
</dbReference>
<dbReference type="InterPro" id="IPR001348">
    <property type="entry name" value="ATP_PRibTrfase_HisG"/>
</dbReference>
<dbReference type="InterPro" id="IPR024893">
    <property type="entry name" value="ATP_PRibTrfase_HisG_short"/>
</dbReference>
<dbReference type="NCBIfam" id="TIGR00070">
    <property type="entry name" value="hisG"/>
    <property type="match status" value="1"/>
</dbReference>
<dbReference type="PANTHER" id="PTHR21403:SF8">
    <property type="entry name" value="ATP PHOSPHORIBOSYLTRANSFERASE"/>
    <property type="match status" value="1"/>
</dbReference>
<dbReference type="PANTHER" id="PTHR21403">
    <property type="entry name" value="ATP PHOSPHORIBOSYLTRANSFERASE ATP-PRTASE"/>
    <property type="match status" value="1"/>
</dbReference>
<dbReference type="Pfam" id="PF01634">
    <property type="entry name" value="HisG"/>
    <property type="match status" value="1"/>
</dbReference>
<dbReference type="SUPFAM" id="SSF53850">
    <property type="entry name" value="Periplasmic binding protein-like II"/>
    <property type="match status" value="1"/>
</dbReference>
<dbReference type="PROSITE" id="PS01316">
    <property type="entry name" value="ATP_P_PHORIBOSYLTR"/>
    <property type="match status" value="1"/>
</dbReference>
<feature type="chain" id="PRO_0000151916" description="ATP phosphoribosyltransferase">
    <location>
        <begin position="1"/>
        <end position="213"/>
    </location>
</feature>
<keyword id="KW-0028">Amino-acid biosynthesis</keyword>
<keyword id="KW-0067">ATP-binding</keyword>
<keyword id="KW-0963">Cytoplasm</keyword>
<keyword id="KW-0328">Glycosyltransferase</keyword>
<keyword id="KW-0368">Histidine biosynthesis</keyword>
<keyword id="KW-0547">Nucleotide-binding</keyword>
<keyword id="KW-0808">Transferase</keyword>
<organism>
    <name type="scientific">Listeria monocytogenes serotype 4b (strain F2365)</name>
    <dbReference type="NCBI Taxonomy" id="265669"/>
    <lineage>
        <taxon>Bacteria</taxon>
        <taxon>Bacillati</taxon>
        <taxon>Bacillota</taxon>
        <taxon>Bacilli</taxon>
        <taxon>Bacillales</taxon>
        <taxon>Listeriaceae</taxon>
        <taxon>Listeria</taxon>
    </lineage>
</organism>
<reference key="1">
    <citation type="journal article" date="2004" name="Nucleic Acids Res.">
        <title>Whole genome comparisons of serotype 4b and 1/2a strains of the food-borne pathogen Listeria monocytogenes reveal new insights into the core genome components of this species.</title>
        <authorList>
            <person name="Nelson K.E."/>
            <person name="Fouts D.E."/>
            <person name="Mongodin E.F."/>
            <person name="Ravel J."/>
            <person name="DeBoy R.T."/>
            <person name="Kolonay J.F."/>
            <person name="Rasko D.A."/>
            <person name="Angiuoli S.V."/>
            <person name="Gill S.R."/>
            <person name="Paulsen I.T."/>
            <person name="Peterson J.D."/>
            <person name="White O."/>
            <person name="Nelson W.C."/>
            <person name="Nierman W.C."/>
            <person name="Beanan M.J."/>
            <person name="Brinkac L.M."/>
            <person name="Daugherty S.C."/>
            <person name="Dodson R.J."/>
            <person name="Durkin A.S."/>
            <person name="Madupu R."/>
            <person name="Haft D.H."/>
            <person name="Selengut J."/>
            <person name="Van Aken S.E."/>
            <person name="Khouri H.M."/>
            <person name="Fedorova N."/>
            <person name="Forberger H.A."/>
            <person name="Tran B."/>
            <person name="Kathariou S."/>
            <person name="Wonderling L.D."/>
            <person name="Uhlich G.A."/>
            <person name="Bayles D.O."/>
            <person name="Luchansky J.B."/>
            <person name="Fraser C.M."/>
        </authorList>
    </citation>
    <scope>NUCLEOTIDE SEQUENCE [LARGE SCALE GENOMIC DNA]</scope>
    <source>
        <strain>F2365</strain>
    </source>
</reference>
<accession>Q722Y2</accession>
<name>HIS1_LISMF</name>
<evidence type="ECO:0000255" key="1">
    <source>
        <dbReference type="HAMAP-Rule" id="MF_01018"/>
    </source>
</evidence>